<proteinExistence type="inferred from homology"/>
<evidence type="ECO:0000255" key="1">
    <source>
        <dbReference type="HAMAP-Rule" id="MF_00135"/>
    </source>
</evidence>
<sequence>MKLKFCGFTSIKDVTAASQLPIDAIGFIHYEKSKRHQTITQIKKLASAVPNHIDKVCVMVNPDLTTIEHVLSNTSINTIQLHGTESIDFIQEIKKKYSSIKITKALAADENIIQNINKYKGFVDLFIIDTPSVSYGGTGQTYDWTILKHIKDIPYLIAGGINSENIQTVNQLKLSHQGYDLASGIEVNGRKDIEKMTAIVNIVKGDRDNE</sequence>
<reference key="1">
    <citation type="journal article" date="2001" name="Lancet">
        <title>Whole genome sequencing of meticillin-resistant Staphylococcus aureus.</title>
        <authorList>
            <person name="Kuroda M."/>
            <person name="Ohta T."/>
            <person name="Uchiyama I."/>
            <person name="Baba T."/>
            <person name="Yuzawa H."/>
            <person name="Kobayashi I."/>
            <person name="Cui L."/>
            <person name="Oguchi A."/>
            <person name="Aoki K."/>
            <person name="Nagai Y."/>
            <person name="Lian J.-Q."/>
            <person name="Ito T."/>
            <person name="Kanamori M."/>
            <person name="Matsumaru H."/>
            <person name="Maruyama A."/>
            <person name="Murakami H."/>
            <person name="Hosoyama A."/>
            <person name="Mizutani-Ui Y."/>
            <person name="Takahashi N.K."/>
            <person name="Sawano T."/>
            <person name="Inoue R."/>
            <person name="Kaito C."/>
            <person name="Sekimizu K."/>
            <person name="Hirakawa H."/>
            <person name="Kuhara S."/>
            <person name="Goto S."/>
            <person name="Yabuzaki J."/>
            <person name="Kanehisa M."/>
            <person name="Yamashita A."/>
            <person name="Oshima K."/>
            <person name="Furuya K."/>
            <person name="Yoshino C."/>
            <person name="Shiba T."/>
            <person name="Hattori M."/>
            <person name="Ogasawara N."/>
            <person name="Hayashi H."/>
            <person name="Hiramatsu K."/>
        </authorList>
    </citation>
    <scope>NUCLEOTIDE SEQUENCE [LARGE SCALE GENOMIC DNA]</scope>
    <source>
        <strain>N315</strain>
    </source>
</reference>
<feature type="chain" id="PRO_0000154378" description="N-(5'-phosphoribosyl)anthranilate isomerase">
    <location>
        <begin position="1"/>
        <end position="210"/>
    </location>
</feature>
<protein>
    <recommendedName>
        <fullName evidence="1">N-(5'-phosphoribosyl)anthranilate isomerase</fullName>
        <shortName evidence="1">PRAI</shortName>
        <ecNumber evidence="1">5.3.1.24</ecNumber>
    </recommendedName>
</protein>
<keyword id="KW-0028">Amino-acid biosynthesis</keyword>
<keyword id="KW-0057">Aromatic amino acid biosynthesis</keyword>
<keyword id="KW-0413">Isomerase</keyword>
<keyword id="KW-0822">Tryptophan biosynthesis</keyword>
<comment type="catalytic activity">
    <reaction evidence="1">
        <text>N-(5-phospho-beta-D-ribosyl)anthranilate = 1-(2-carboxyphenylamino)-1-deoxy-D-ribulose 5-phosphate</text>
        <dbReference type="Rhea" id="RHEA:21540"/>
        <dbReference type="ChEBI" id="CHEBI:18277"/>
        <dbReference type="ChEBI" id="CHEBI:58613"/>
        <dbReference type="EC" id="5.3.1.24"/>
    </reaction>
</comment>
<comment type="pathway">
    <text evidence="1">Amino-acid biosynthesis; L-tryptophan biosynthesis; L-tryptophan from chorismate: step 3/5.</text>
</comment>
<comment type="similarity">
    <text evidence="1">Belongs to the TrpF family.</text>
</comment>
<organism>
    <name type="scientific">Staphylococcus aureus (strain N315)</name>
    <dbReference type="NCBI Taxonomy" id="158879"/>
    <lineage>
        <taxon>Bacteria</taxon>
        <taxon>Bacillati</taxon>
        <taxon>Bacillota</taxon>
        <taxon>Bacilli</taxon>
        <taxon>Bacillales</taxon>
        <taxon>Staphylococcaceae</taxon>
        <taxon>Staphylococcus</taxon>
    </lineage>
</organism>
<gene>
    <name evidence="1" type="primary">trpF</name>
    <name type="ordered locus">SA1203</name>
</gene>
<dbReference type="EC" id="5.3.1.24" evidence="1"/>
<dbReference type="EMBL" id="BA000018">
    <property type="protein sequence ID" value="BAB42463.1"/>
    <property type="molecule type" value="Genomic_DNA"/>
</dbReference>
<dbReference type="PIR" id="C89913">
    <property type="entry name" value="C89913"/>
</dbReference>
<dbReference type="RefSeq" id="WP_000768192.1">
    <property type="nucleotide sequence ID" value="NC_002745.2"/>
</dbReference>
<dbReference type="SMR" id="P67006"/>
<dbReference type="EnsemblBacteria" id="BAB42463">
    <property type="protein sequence ID" value="BAB42463"/>
    <property type="gene ID" value="BAB42463"/>
</dbReference>
<dbReference type="KEGG" id="sau:SA1203"/>
<dbReference type="HOGENOM" id="CLU_076364_1_1_9"/>
<dbReference type="UniPathway" id="UPA00035">
    <property type="reaction ID" value="UER00042"/>
</dbReference>
<dbReference type="GO" id="GO:0004640">
    <property type="term" value="F:phosphoribosylanthranilate isomerase activity"/>
    <property type="evidence" value="ECO:0007669"/>
    <property type="project" value="UniProtKB-UniRule"/>
</dbReference>
<dbReference type="GO" id="GO:0000162">
    <property type="term" value="P:L-tryptophan biosynthetic process"/>
    <property type="evidence" value="ECO:0007669"/>
    <property type="project" value="UniProtKB-UniRule"/>
</dbReference>
<dbReference type="CDD" id="cd00405">
    <property type="entry name" value="PRAI"/>
    <property type="match status" value="1"/>
</dbReference>
<dbReference type="FunFam" id="3.20.20.70:FF:000277">
    <property type="entry name" value="Phosphoribosylanthranilate isomerase"/>
    <property type="match status" value="1"/>
</dbReference>
<dbReference type="Gene3D" id="3.20.20.70">
    <property type="entry name" value="Aldolase class I"/>
    <property type="match status" value="1"/>
</dbReference>
<dbReference type="HAMAP" id="MF_00135">
    <property type="entry name" value="PRAI"/>
    <property type="match status" value="1"/>
</dbReference>
<dbReference type="InterPro" id="IPR013785">
    <property type="entry name" value="Aldolase_TIM"/>
</dbReference>
<dbReference type="InterPro" id="IPR001240">
    <property type="entry name" value="PRAI_dom"/>
</dbReference>
<dbReference type="InterPro" id="IPR011060">
    <property type="entry name" value="RibuloseP-bd_barrel"/>
</dbReference>
<dbReference type="InterPro" id="IPR044643">
    <property type="entry name" value="TrpF_fam"/>
</dbReference>
<dbReference type="NCBIfam" id="NF010563">
    <property type="entry name" value="PRK13958.1"/>
    <property type="match status" value="1"/>
</dbReference>
<dbReference type="PANTHER" id="PTHR42894">
    <property type="entry name" value="N-(5'-PHOSPHORIBOSYL)ANTHRANILATE ISOMERASE"/>
    <property type="match status" value="1"/>
</dbReference>
<dbReference type="PANTHER" id="PTHR42894:SF1">
    <property type="entry name" value="N-(5'-PHOSPHORIBOSYL)ANTHRANILATE ISOMERASE"/>
    <property type="match status" value="1"/>
</dbReference>
<dbReference type="Pfam" id="PF00697">
    <property type="entry name" value="PRAI"/>
    <property type="match status" value="1"/>
</dbReference>
<dbReference type="SUPFAM" id="SSF51366">
    <property type="entry name" value="Ribulose-phoshate binding barrel"/>
    <property type="match status" value="1"/>
</dbReference>
<name>TRPF_STAAN</name>
<accession>P67006</accession>
<accession>Q99UB0</accession>